<accession>O83875</accession>
<feature type="chain" id="PRO_0000167274" description="Small ribosomal subunit protein bS16">
    <location>
        <begin position="1"/>
        <end position="123"/>
    </location>
</feature>
<name>RS16_TREPA</name>
<proteinExistence type="inferred from homology"/>
<keyword id="KW-1185">Reference proteome</keyword>
<keyword id="KW-0687">Ribonucleoprotein</keyword>
<keyword id="KW-0689">Ribosomal protein</keyword>
<reference key="1">
    <citation type="journal article" date="1998" name="Science">
        <title>Complete genome sequence of Treponema pallidum, the syphilis spirochete.</title>
        <authorList>
            <person name="Fraser C.M."/>
            <person name="Norris S.J."/>
            <person name="Weinstock G.M."/>
            <person name="White O."/>
            <person name="Sutton G.G."/>
            <person name="Dodson R.J."/>
            <person name="Gwinn M.L."/>
            <person name="Hickey E.K."/>
            <person name="Clayton R.A."/>
            <person name="Ketchum K.A."/>
            <person name="Sodergren E."/>
            <person name="Hardham J.M."/>
            <person name="McLeod M.P."/>
            <person name="Salzberg S.L."/>
            <person name="Peterson J.D."/>
            <person name="Khalak H.G."/>
            <person name="Richardson D.L."/>
            <person name="Howell J.K."/>
            <person name="Chidambaram M."/>
            <person name="Utterback T.R."/>
            <person name="McDonald L.A."/>
            <person name="Artiach P."/>
            <person name="Bowman C."/>
            <person name="Cotton M.D."/>
            <person name="Fujii C."/>
            <person name="Garland S.A."/>
            <person name="Hatch B."/>
            <person name="Horst K."/>
            <person name="Roberts K.M."/>
            <person name="Sandusky M."/>
            <person name="Weidman J.F."/>
            <person name="Smith H.O."/>
            <person name="Venter J.C."/>
        </authorList>
    </citation>
    <scope>NUCLEOTIDE SEQUENCE [LARGE SCALE GENOMIC DNA]</scope>
    <source>
        <strain>Nichols</strain>
    </source>
</reference>
<sequence length="123" mass="13612">MSLRIRLKKLGSKKRPYYRIVVQDAREPRDGRAIEELGIYQPIAPKGTEVSFRLDRARFWLERGAQPSDTVRRLLQSRRGSVLNAVASDERRVASSQQAADLAHVESVSCAAPIPSSPGGQGV</sequence>
<dbReference type="EMBL" id="AE000520">
    <property type="protein sequence ID" value="AAC65857.1"/>
    <property type="molecule type" value="Genomic_DNA"/>
</dbReference>
<dbReference type="PIR" id="F71267">
    <property type="entry name" value="F71267"/>
</dbReference>
<dbReference type="SMR" id="O83875"/>
<dbReference type="IntAct" id="O83875">
    <property type="interactions" value="9"/>
</dbReference>
<dbReference type="STRING" id="243276.TP_0905"/>
<dbReference type="EnsemblBacteria" id="AAC65857">
    <property type="protein sequence ID" value="AAC65857"/>
    <property type="gene ID" value="TP_0905"/>
</dbReference>
<dbReference type="KEGG" id="tpa:TP_0905"/>
<dbReference type="KEGG" id="tpw:TPANIC_0905"/>
<dbReference type="eggNOG" id="COG0228">
    <property type="taxonomic scope" value="Bacteria"/>
</dbReference>
<dbReference type="HOGENOM" id="CLU_100590_3_1_12"/>
<dbReference type="OrthoDB" id="9807878at2"/>
<dbReference type="Proteomes" id="UP000000811">
    <property type="component" value="Chromosome"/>
</dbReference>
<dbReference type="GO" id="GO:0005737">
    <property type="term" value="C:cytoplasm"/>
    <property type="evidence" value="ECO:0007669"/>
    <property type="project" value="UniProtKB-ARBA"/>
</dbReference>
<dbReference type="GO" id="GO:0015935">
    <property type="term" value="C:small ribosomal subunit"/>
    <property type="evidence" value="ECO:0007669"/>
    <property type="project" value="TreeGrafter"/>
</dbReference>
<dbReference type="GO" id="GO:0003735">
    <property type="term" value="F:structural constituent of ribosome"/>
    <property type="evidence" value="ECO:0007669"/>
    <property type="project" value="InterPro"/>
</dbReference>
<dbReference type="GO" id="GO:0006412">
    <property type="term" value="P:translation"/>
    <property type="evidence" value="ECO:0007669"/>
    <property type="project" value="UniProtKB-UniRule"/>
</dbReference>
<dbReference type="Gene3D" id="3.30.1320.10">
    <property type="match status" value="1"/>
</dbReference>
<dbReference type="HAMAP" id="MF_00385">
    <property type="entry name" value="Ribosomal_bS16"/>
    <property type="match status" value="1"/>
</dbReference>
<dbReference type="InterPro" id="IPR000307">
    <property type="entry name" value="Ribosomal_bS16"/>
</dbReference>
<dbReference type="InterPro" id="IPR023803">
    <property type="entry name" value="Ribosomal_bS16_dom_sf"/>
</dbReference>
<dbReference type="NCBIfam" id="TIGR00002">
    <property type="entry name" value="S16"/>
    <property type="match status" value="1"/>
</dbReference>
<dbReference type="PANTHER" id="PTHR12919">
    <property type="entry name" value="30S RIBOSOMAL PROTEIN S16"/>
    <property type="match status" value="1"/>
</dbReference>
<dbReference type="PANTHER" id="PTHR12919:SF20">
    <property type="entry name" value="SMALL RIBOSOMAL SUBUNIT PROTEIN BS16M"/>
    <property type="match status" value="1"/>
</dbReference>
<dbReference type="Pfam" id="PF00886">
    <property type="entry name" value="Ribosomal_S16"/>
    <property type="match status" value="1"/>
</dbReference>
<dbReference type="SUPFAM" id="SSF54565">
    <property type="entry name" value="Ribosomal protein S16"/>
    <property type="match status" value="1"/>
</dbReference>
<evidence type="ECO:0000255" key="1">
    <source>
        <dbReference type="HAMAP-Rule" id="MF_00385"/>
    </source>
</evidence>
<evidence type="ECO:0000305" key="2"/>
<protein>
    <recommendedName>
        <fullName evidence="1">Small ribosomal subunit protein bS16</fullName>
    </recommendedName>
    <alternativeName>
        <fullName evidence="2">30S ribosomal protein S16</fullName>
    </alternativeName>
</protein>
<gene>
    <name evidence="1" type="primary">rpsP</name>
    <name type="ordered locus">TP_0905</name>
</gene>
<comment type="similarity">
    <text evidence="1">Belongs to the bacterial ribosomal protein bS16 family.</text>
</comment>
<organism>
    <name type="scientific">Treponema pallidum (strain Nichols)</name>
    <dbReference type="NCBI Taxonomy" id="243276"/>
    <lineage>
        <taxon>Bacteria</taxon>
        <taxon>Pseudomonadati</taxon>
        <taxon>Spirochaetota</taxon>
        <taxon>Spirochaetia</taxon>
        <taxon>Spirochaetales</taxon>
        <taxon>Treponemataceae</taxon>
        <taxon>Treponema</taxon>
    </lineage>
</organism>